<name>DPCKG_THEON</name>
<sequence>MFHFKLTPELRKELKDPLGKLIRGEIPKPYLMIREELERARHVVTVGDVVTENVLRLGIKPSLAIYDHKTKRQEYSPDIESDAVIMTVQNPPGTITKALLNAIKKGFGLAERGRKVYIKVCGEEDLAAIPAVLYAPEGSVVLYGQPDEGVVLIKVTPECKLKCGRLMSKMEVVRDGD</sequence>
<proteinExistence type="inferred from homology"/>
<comment type="function">
    <text evidence="1">Catalyzes the GTP-dependent phosphorylation of the 3'-hydroxyl group of dephosphocoenzyme A to form coenzyme A (CoA).</text>
</comment>
<comment type="catalytic activity">
    <reaction evidence="1">
        <text>3'-dephospho-CoA + GTP = GDP + CoA + H(+)</text>
        <dbReference type="Rhea" id="RHEA:61156"/>
        <dbReference type="ChEBI" id="CHEBI:15378"/>
        <dbReference type="ChEBI" id="CHEBI:37565"/>
        <dbReference type="ChEBI" id="CHEBI:57287"/>
        <dbReference type="ChEBI" id="CHEBI:57328"/>
        <dbReference type="ChEBI" id="CHEBI:58189"/>
        <dbReference type="EC" id="2.7.1.237"/>
    </reaction>
</comment>
<comment type="pathway">
    <text evidence="1">Cofactor biosynthesis; coenzyme A biosynthesis.</text>
</comment>
<comment type="similarity">
    <text evidence="1">Belongs to the GTP-dependent DPCK family.</text>
</comment>
<feature type="chain" id="PRO_0000380067" description="GTP-dependent dephospho-CoA kinase">
    <location>
        <begin position="1"/>
        <end position="177"/>
    </location>
</feature>
<feature type="binding site" evidence="1">
    <location>
        <position position="48"/>
    </location>
    <ligand>
        <name>GTP</name>
        <dbReference type="ChEBI" id="CHEBI:37565"/>
    </ligand>
</feature>
<feature type="binding site" evidence="1">
    <location>
        <position position="49"/>
    </location>
    <ligand>
        <name>GTP</name>
        <dbReference type="ChEBI" id="CHEBI:37565"/>
    </ligand>
</feature>
<feature type="binding site" evidence="1">
    <location>
        <position position="50"/>
    </location>
    <ligand>
        <name>GTP</name>
        <dbReference type="ChEBI" id="CHEBI:37565"/>
    </ligand>
</feature>
<feature type="binding site" evidence="1">
    <location>
        <position position="67"/>
    </location>
    <ligand>
        <name>GTP</name>
        <dbReference type="ChEBI" id="CHEBI:37565"/>
    </ligand>
</feature>
<feature type="binding site" evidence="1">
    <location>
        <position position="69"/>
    </location>
    <ligand>
        <name>GTP</name>
        <dbReference type="ChEBI" id="CHEBI:37565"/>
    </ligand>
</feature>
<feature type="binding site" evidence="1">
    <location>
        <position position="124"/>
    </location>
    <ligand>
        <name>GTP</name>
        <dbReference type="ChEBI" id="CHEBI:37565"/>
    </ligand>
</feature>
<feature type="binding site" evidence="1">
    <location>
        <position position="147"/>
    </location>
    <ligand>
        <name>GTP</name>
        <dbReference type="ChEBI" id="CHEBI:37565"/>
    </ligand>
</feature>
<organism>
    <name type="scientific">Thermococcus onnurineus (strain NA1)</name>
    <dbReference type="NCBI Taxonomy" id="523850"/>
    <lineage>
        <taxon>Archaea</taxon>
        <taxon>Methanobacteriati</taxon>
        <taxon>Methanobacteriota</taxon>
        <taxon>Thermococci</taxon>
        <taxon>Thermococcales</taxon>
        <taxon>Thermococcaceae</taxon>
        <taxon>Thermococcus</taxon>
    </lineage>
</organism>
<keyword id="KW-0173">Coenzyme A biosynthesis</keyword>
<keyword id="KW-0342">GTP-binding</keyword>
<keyword id="KW-0418">Kinase</keyword>
<keyword id="KW-0547">Nucleotide-binding</keyword>
<keyword id="KW-0808">Transferase</keyword>
<gene>
    <name type="ordered locus">TON_1911</name>
</gene>
<dbReference type="EC" id="2.7.1.237" evidence="1"/>
<dbReference type="EMBL" id="CP000855">
    <property type="protein sequence ID" value="ACJ17402.1"/>
    <property type="molecule type" value="Genomic_DNA"/>
</dbReference>
<dbReference type="RefSeq" id="WP_012572874.1">
    <property type="nucleotide sequence ID" value="NC_011529.1"/>
</dbReference>
<dbReference type="SMR" id="B6YW36"/>
<dbReference type="STRING" id="523850.TON_1911"/>
<dbReference type="GeneID" id="7017583"/>
<dbReference type="KEGG" id="ton:TON_1911"/>
<dbReference type="PATRIC" id="fig|523850.10.peg.1926"/>
<dbReference type="eggNOG" id="arCOG04076">
    <property type="taxonomic scope" value="Archaea"/>
</dbReference>
<dbReference type="HOGENOM" id="CLU_120795_1_0_2"/>
<dbReference type="OrthoDB" id="15447at2157"/>
<dbReference type="UniPathway" id="UPA00241"/>
<dbReference type="Proteomes" id="UP000002727">
    <property type="component" value="Chromosome"/>
</dbReference>
<dbReference type="GO" id="GO:0005525">
    <property type="term" value="F:GTP binding"/>
    <property type="evidence" value="ECO:0007669"/>
    <property type="project" value="UniProtKB-UniRule"/>
</dbReference>
<dbReference type="GO" id="GO:0016301">
    <property type="term" value="F:kinase activity"/>
    <property type="evidence" value="ECO:0007669"/>
    <property type="project" value="UniProtKB-UniRule"/>
</dbReference>
<dbReference type="GO" id="GO:0015937">
    <property type="term" value="P:coenzyme A biosynthetic process"/>
    <property type="evidence" value="ECO:0007669"/>
    <property type="project" value="UniProtKB-UniRule"/>
</dbReference>
<dbReference type="HAMAP" id="MF_00590">
    <property type="entry name" value="Dephospho_CoA_kinase_GTP_dep"/>
    <property type="match status" value="1"/>
</dbReference>
<dbReference type="InterPro" id="IPR054930">
    <property type="entry name" value="deph_CoA_kin_Thcocales"/>
</dbReference>
<dbReference type="InterPro" id="IPR007164">
    <property type="entry name" value="GTP-dep_dephospho-CoA_kin"/>
</dbReference>
<dbReference type="NCBIfam" id="NF041125">
    <property type="entry name" value="deph_CoA_kin_Thcocales"/>
    <property type="match status" value="1"/>
</dbReference>
<dbReference type="NCBIfam" id="NF002248">
    <property type="entry name" value="PRK01160.1-3"/>
    <property type="match status" value="1"/>
</dbReference>
<dbReference type="PANTHER" id="PTHR40732:SF1">
    <property type="entry name" value="GTP-DEPENDENT DEPHOSPHO-COA KINASE"/>
    <property type="match status" value="1"/>
</dbReference>
<dbReference type="PANTHER" id="PTHR40732">
    <property type="entry name" value="UPF0218 PROTEIN TK1697"/>
    <property type="match status" value="1"/>
</dbReference>
<dbReference type="Pfam" id="PF04019">
    <property type="entry name" value="DUF359"/>
    <property type="match status" value="1"/>
</dbReference>
<dbReference type="PIRSF" id="PIRSF006533">
    <property type="entry name" value="UCP006533"/>
    <property type="match status" value="1"/>
</dbReference>
<reference key="1">
    <citation type="journal article" date="2008" name="J. Bacteriol.">
        <title>The complete genome sequence of Thermococcus onnurineus NA1 reveals a mixed heterotrophic and carboxydotrophic metabolism.</title>
        <authorList>
            <person name="Lee H.S."/>
            <person name="Kang S.G."/>
            <person name="Bae S.S."/>
            <person name="Lim J.K."/>
            <person name="Cho Y."/>
            <person name="Kim Y.J."/>
            <person name="Jeon J.H."/>
            <person name="Cha S.-S."/>
            <person name="Kwon K.K."/>
            <person name="Kim H.-T."/>
            <person name="Park C.-J."/>
            <person name="Lee H.-W."/>
            <person name="Kim S.I."/>
            <person name="Chun J."/>
            <person name="Colwell R.R."/>
            <person name="Kim S.-J."/>
            <person name="Lee J.-H."/>
        </authorList>
    </citation>
    <scope>NUCLEOTIDE SEQUENCE [LARGE SCALE GENOMIC DNA]</scope>
    <source>
        <strain>NA1</strain>
    </source>
</reference>
<accession>B6YW36</accession>
<protein>
    <recommendedName>
        <fullName evidence="1">GTP-dependent dephospho-CoA kinase</fullName>
        <ecNumber evidence="1">2.7.1.237</ecNumber>
    </recommendedName>
    <alternativeName>
        <fullName evidence="1">Dephospho-coenzyme A kinase</fullName>
        <shortName evidence="1">DPCK</shortName>
    </alternativeName>
</protein>
<evidence type="ECO:0000255" key="1">
    <source>
        <dbReference type="HAMAP-Rule" id="MF_00590"/>
    </source>
</evidence>